<dbReference type="EC" id="2.7.7.6" evidence="1"/>
<dbReference type="EMBL" id="CU468230">
    <property type="protein sequence ID" value="CAP02512.1"/>
    <property type="molecule type" value="Genomic_DNA"/>
</dbReference>
<dbReference type="SMR" id="B0VLZ5"/>
<dbReference type="KEGG" id="abm:ABSDF3242"/>
<dbReference type="HOGENOM" id="CLU_000524_3_1_6"/>
<dbReference type="Proteomes" id="UP000001741">
    <property type="component" value="Chromosome"/>
</dbReference>
<dbReference type="GO" id="GO:0000428">
    <property type="term" value="C:DNA-directed RNA polymerase complex"/>
    <property type="evidence" value="ECO:0007669"/>
    <property type="project" value="UniProtKB-KW"/>
</dbReference>
<dbReference type="GO" id="GO:0003677">
    <property type="term" value="F:DNA binding"/>
    <property type="evidence" value="ECO:0007669"/>
    <property type="project" value="UniProtKB-UniRule"/>
</dbReference>
<dbReference type="GO" id="GO:0003899">
    <property type="term" value="F:DNA-directed RNA polymerase activity"/>
    <property type="evidence" value="ECO:0007669"/>
    <property type="project" value="UniProtKB-UniRule"/>
</dbReference>
<dbReference type="GO" id="GO:0000287">
    <property type="term" value="F:magnesium ion binding"/>
    <property type="evidence" value="ECO:0007669"/>
    <property type="project" value="UniProtKB-UniRule"/>
</dbReference>
<dbReference type="GO" id="GO:0008270">
    <property type="term" value="F:zinc ion binding"/>
    <property type="evidence" value="ECO:0007669"/>
    <property type="project" value="UniProtKB-UniRule"/>
</dbReference>
<dbReference type="GO" id="GO:0006351">
    <property type="term" value="P:DNA-templated transcription"/>
    <property type="evidence" value="ECO:0007669"/>
    <property type="project" value="UniProtKB-UniRule"/>
</dbReference>
<dbReference type="CDD" id="cd02655">
    <property type="entry name" value="RNAP_beta'_C"/>
    <property type="match status" value="1"/>
</dbReference>
<dbReference type="CDD" id="cd01609">
    <property type="entry name" value="RNAP_beta'_N"/>
    <property type="match status" value="1"/>
</dbReference>
<dbReference type="FunFam" id="1.10.132.30:FF:000003">
    <property type="entry name" value="DNA-directed RNA polymerase subunit beta"/>
    <property type="match status" value="1"/>
</dbReference>
<dbReference type="FunFam" id="1.10.150.390:FF:000002">
    <property type="entry name" value="DNA-directed RNA polymerase subunit beta"/>
    <property type="match status" value="1"/>
</dbReference>
<dbReference type="FunFam" id="4.10.860.120:FF:000001">
    <property type="entry name" value="DNA-directed RNA polymerase subunit beta"/>
    <property type="match status" value="1"/>
</dbReference>
<dbReference type="Gene3D" id="1.10.132.30">
    <property type="match status" value="1"/>
</dbReference>
<dbReference type="Gene3D" id="1.10.150.390">
    <property type="match status" value="1"/>
</dbReference>
<dbReference type="Gene3D" id="1.10.1790.20">
    <property type="match status" value="1"/>
</dbReference>
<dbReference type="Gene3D" id="1.10.40.90">
    <property type="match status" value="1"/>
</dbReference>
<dbReference type="Gene3D" id="2.40.40.20">
    <property type="match status" value="1"/>
</dbReference>
<dbReference type="Gene3D" id="2.40.50.100">
    <property type="match status" value="3"/>
</dbReference>
<dbReference type="Gene3D" id="4.10.860.120">
    <property type="entry name" value="RNA polymerase II, clamp domain"/>
    <property type="match status" value="1"/>
</dbReference>
<dbReference type="Gene3D" id="1.10.274.100">
    <property type="entry name" value="RNA polymerase Rpb1, domain 3"/>
    <property type="match status" value="1"/>
</dbReference>
<dbReference type="HAMAP" id="MF_01322">
    <property type="entry name" value="RNApol_bact_RpoC"/>
    <property type="match status" value="1"/>
</dbReference>
<dbReference type="InterPro" id="IPR045867">
    <property type="entry name" value="DNA-dir_RpoC_beta_prime"/>
</dbReference>
<dbReference type="InterPro" id="IPR012754">
    <property type="entry name" value="DNA-dir_RpoC_beta_prime_bact"/>
</dbReference>
<dbReference type="InterPro" id="IPR000722">
    <property type="entry name" value="RNA_pol_asu"/>
</dbReference>
<dbReference type="InterPro" id="IPR006592">
    <property type="entry name" value="RNA_pol_N"/>
</dbReference>
<dbReference type="InterPro" id="IPR007080">
    <property type="entry name" value="RNA_pol_Rpb1_1"/>
</dbReference>
<dbReference type="InterPro" id="IPR007066">
    <property type="entry name" value="RNA_pol_Rpb1_3"/>
</dbReference>
<dbReference type="InterPro" id="IPR042102">
    <property type="entry name" value="RNA_pol_Rpb1_3_sf"/>
</dbReference>
<dbReference type="InterPro" id="IPR007083">
    <property type="entry name" value="RNA_pol_Rpb1_4"/>
</dbReference>
<dbReference type="InterPro" id="IPR007081">
    <property type="entry name" value="RNA_pol_Rpb1_5"/>
</dbReference>
<dbReference type="InterPro" id="IPR044893">
    <property type="entry name" value="RNA_pol_Rpb1_clamp_domain"/>
</dbReference>
<dbReference type="InterPro" id="IPR038120">
    <property type="entry name" value="Rpb1_funnel_sf"/>
</dbReference>
<dbReference type="NCBIfam" id="TIGR02386">
    <property type="entry name" value="rpoC_TIGR"/>
    <property type="match status" value="1"/>
</dbReference>
<dbReference type="PANTHER" id="PTHR19376">
    <property type="entry name" value="DNA-DIRECTED RNA POLYMERASE"/>
    <property type="match status" value="1"/>
</dbReference>
<dbReference type="PANTHER" id="PTHR19376:SF54">
    <property type="entry name" value="DNA-DIRECTED RNA POLYMERASE SUBUNIT BETA"/>
    <property type="match status" value="1"/>
</dbReference>
<dbReference type="Pfam" id="PF04997">
    <property type="entry name" value="RNA_pol_Rpb1_1"/>
    <property type="match status" value="1"/>
</dbReference>
<dbReference type="Pfam" id="PF00623">
    <property type="entry name" value="RNA_pol_Rpb1_2"/>
    <property type="match status" value="2"/>
</dbReference>
<dbReference type="Pfam" id="PF04983">
    <property type="entry name" value="RNA_pol_Rpb1_3"/>
    <property type="match status" value="1"/>
</dbReference>
<dbReference type="Pfam" id="PF05000">
    <property type="entry name" value="RNA_pol_Rpb1_4"/>
    <property type="match status" value="1"/>
</dbReference>
<dbReference type="Pfam" id="PF04998">
    <property type="entry name" value="RNA_pol_Rpb1_5"/>
    <property type="match status" value="1"/>
</dbReference>
<dbReference type="SMART" id="SM00663">
    <property type="entry name" value="RPOLA_N"/>
    <property type="match status" value="1"/>
</dbReference>
<dbReference type="SUPFAM" id="SSF64484">
    <property type="entry name" value="beta and beta-prime subunits of DNA dependent RNA-polymerase"/>
    <property type="match status" value="1"/>
</dbReference>
<feature type="chain" id="PRO_0000353275" description="DNA-directed RNA polymerase subunit beta'">
    <location>
        <begin position="1"/>
        <end position="1397"/>
    </location>
</feature>
<feature type="binding site" evidence="1">
    <location>
        <position position="75"/>
    </location>
    <ligand>
        <name>Zn(2+)</name>
        <dbReference type="ChEBI" id="CHEBI:29105"/>
        <label>1</label>
    </ligand>
</feature>
<feature type="binding site" evidence="1">
    <location>
        <position position="77"/>
    </location>
    <ligand>
        <name>Zn(2+)</name>
        <dbReference type="ChEBI" id="CHEBI:29105"/>
        <label>1</label>
    </ligand>
</feature>
<feature type="binding site" evidence="1">
    <location>
        <position position="90"/>
    </location>
    <ligand>
        <name>Zn(2+)</name>
        <dbReference type="ChEBI" id="CHEBI:29105"/>
        <label>1</label>
    </ligand>
</feature>
<feature type="binding site" evidence="1">
    <location>
        <position position="93"/>
    </location>
    <ligand>
        <name>Zn(2+)</name>
        <dbReference type="ChEBI" id="CHEBI:29105"/>
        <label>1</label>
    </ligand>
</feature>
<feature type="binding site" evidence="1">
    <location>
        <position position="465"/>
    </location>
    <ligand>
        <name>Mg(2+)</name>
        <dbReference type="ChEBI" id="CHEBI:18420"/>
    </ligand>
</feature>
<feature type="binding site" evidence="1">
    <location>
        <position position="467"/>
    </location>
    <ligand>
        <name>Mg(2+)</name>
        <dbReference type="ChEBI" id="CHEBI:18420"/>
    </ligand>
</feature>
<feature type="binding site" evidence="1">
    <location>
        <position position="469"/>
    </location>
    <ligand>
        <name>Mg(2+)</name>
        <dbReference type="ChEBI" id="CHEBI:18420"/>
    </ligand>
</feature>
<feature type="binding site" evidence="1">
    <location>
        <position position="819"/>
    </location>
    <ligand>
        <name>Zn(2+)</name>
        <dbReference type="ChEBI" id="CHEBI:29105"/>
        <label>2</label>
    </ligand>
</feature>
<feature type="binding site" evidence="1">
    <location>
        <position position="893"/>
    </location>
    <ligand>
        <name>Zn(2+)</name>
        <dbReference type="ChEBI" id="CHEBI:29105"/>
        <label>2</label>
    </ligand>
</feature>
<feature type="binding site" evidence="1">
    <location>
        <position position="900"/>
    </location>
    <ligand>
        <name>Zn(2+)</name>
        <dbReference type="ChEBI" id="CHEBI:29105"/>
        <label>2</label>
    </ligand>
</feature>
<feature type="binding site" evidence="1">
    <location>
        <position position="903"/>
    </location>
    <ligand>
        <name>Zn(2+)</name>
        <dbReference type="ChEBI" id="CHEBI:29105"/>
        <label>2</label>
    </ligand>
</feature>
<protein>
    <recommendedName>
        <fullName evidence="1">DNA-directed RNA polymerase subunit beta'</fullName>
        <shortName evidence="1">RNAP subunit beta'</shortName>
        <ecNumber evidence="1">2.7.7.6</ecNumber>
    </recommendedName>
    <alternativeName>
        <fullName evidence="1">RNA polymerase subunit beta'</fullName>
    </alternativeName>
    <alternativeName>
        <fullName evidence="1">Transcriptase subunit beta'</fullName>
    </alternativeName>
</protein>
<accession>B0VLZ5</accession>
<comment type="function">
    <text evidence="1">DNA-dependent RNA polymerase catalyzes the transcription of DNA into RNA using the four ribonucleoside triphosphates as substrates.</text>
</comment>
<comment type="catalytic activity">
    <reaction evidence="1">
        <text>RNA(n) + a ribonucleoside 5'-triphosphate = RNA(n+1) + diphosphate</text>
        <dbReference type="Rhea" id="RHEA:21248"/>
        <dbReference type="Rhea" id="RHEA-COMP:14527"/>
        <dbReference type="Rhea" id="RHEA-COMP:17342"/>
        <dbReference type="ChEBI" id="CHEBI:33019"/>
        <dbReference type="ChEBI" id="CHEBI:61557"/>
        <dbReference type="ChEBI" id="CHEBI:140395"/>
        <dbReference type="EC" id="2.7.7.6"/>
    </reaction>
</comment>
<comment type="cofactor">
    <cofactor evidence="1">
        <name>Mg(2+)</name>
        <dbReference type="ChEBI" id="CHEBI:18420"/>
    </cofactor>
    <text evidence="1">Binds 1 Mg(2+) ion per subunit.</text>
</comment>
<comment type="cofactor">
    <cofactor evidence="1">
        <name>Zn(2+)</name>
        <dbReference type="ChEBI" id="CHEBI:29105"/>
    </cofactor>
    <text evidence="1">Binds 2 Zn(2+) ions per subunit.</text>
</comment>
<comment type="subunit">
    <text evidence="1">The RNAP catalytic core consists of 2 alpha, 1 beta, 1 beta' and 1 omega subunit. When a sigma factor is associated with the core the holoenzyme is formed, which can initiate transcription.</text>
</comment>
<comment type="similarity">
    <text evidence="1">Belongs to the RNA polymerase beta' chain family.</text>
</comment>
<organism>
    <name type="scientific">Acinetobacter baumannii (strain SDF)</name>
    <dbReference type="NCBI Taxonomy" id="509170"/>
    <lineage>
        <taxon>Bacteria</taxon>
        <taxon>Pseudomonadati</taxon>
        <taxon>Pseudomonadota</taxon>
        <taxon>Gammaproteobacteria</taxon>
        <taxon>Moraxellales</taxon>
        <taxon>Moraxellaceae</taxon>
        <taxon>Acinetobacter</taxon>
        <taxon>Acinetobacter calcoaceticus/baumannii complex</taxon>
    </lineage>
</organism>
<evidence type="ECO:0000255" key="1">
    <source>
        <dbReference type="HAMAP-Rule" id="MF_01322"/>
    </source>
</evidence>
<sequence length="1397" mass="155120">MKDLLDIMRKKTDSDGHAPVEFDRIRIGLASPEMIKSWSHGEVKKPETINYRTFKPERDGLFCAKIFGPVKDYECLCGKYKRMKYKGVICEKCGVEVTTAKVRRERMGHIELASPVAHIWFLKSLPSRIGLLLDMTLRDIERVLYFESYVVTDPGMTPFEKYQLLNDEEYFTALEEHGDEFVAKMGAEAVQDLLKDIDLEAEISRLREEIPQTTSETKLKKASKRLKLMEAFKDSNNKPEWMVMNVLPVLPPDLRPLVPLEGGRFATSDLNDLYRRVINRNNRLKRLLDLAAPDIIVRNEKRMLQESVDALLDNGRRGRAITGSNKRPLKSLADMIKGKQGRFRQNLLGKRVDYSGRSVITVGPTLRLHQCGLPKKMALELFKPFIFAKLQASGQATTIKAAKKMVERETPEVWDVLASVIRQHPVMLNRAPTLHRLGLQAFEPILIEGKAIRLHPLVCAAFNADFDGDQMAVHVPLTLEAQLEARALMMSTNNILSPANGEPIIVPSQDVVLGLYYITRDAVNAKGEGMVFADTHEVNRALATGQVAIHARVKVRVHQTVINENGEREQQTIIVDTTPGRCLLWEVVPEGLSFDMINLEMTKKNISKLINSCYRKLGLKDTVIFADQLMYLGFRQATRSGVSVGMEDMLIPPTKHTIIDKAETEVREIEQQFEQGFVTAGERYNKVVDIWARTNDQVAKAMMDNLSYTLVKNKQGEDEKQKSFNSIYMMSDSGARGSAAQIRQLAGMRGLMAKPDGSIIETPIKANFREGLTVLQYFISTHGARKGLADTALKTANSGYLTRRLVDVAQDLVITEPDCGTRGGLVMTPFIQGGDVIEPLRDRVLGRVTAEDVRRASDDEVVLPRGTLIDEKIAAQLEEAGVDEVKVRSVIACESTFGVCAKCYGRDLARGHLVNPGESVGVMAAQSIGEPGTQLTMRTFHVGGAASRTSAANSVQVRNKGTVRFHNVKTVQHAKGHLVSVSRSGEIGIADELGRERERYKLPYGASILLKDGELVEAGGIVATWDPHTHPLVTEVAGKARFSQIADGVTATSKTDDATGMTTVEILPVTARPASGKDLRPAIVLDTTDGGEQFYFLPQNTIVTVRDGETIGVGDVIGRVPQESSRTRDITGGLPRVADLFEARKPKEHAILAEVSGIVSFGKETKGKNRLVITPDDGSEIYEELIPKWRQINVFEGEHVNRGETISDGPQNPHDILRLKGEVALTNYIVNEVQDVYRLQGVKINDKHIEVIVRQMLRKVDIIDGGDTSFIKGEQVDYIRVVQENQAVLAQNKFPAKFERQLMGITKASLSTDSFISAASFQETTRVLTEAAVTGKEDDLRGLKENVVVGRLIPAGTGLAYHLERRRQEAEAAEHALHNDFSEVDQAFSQALNSEQF</sequence>
<keyword id="KW-0240">DNA-directed RNA polymerase</keyword>
<keyword id="KW-0460">Magnesium</keyword>
<keyword id="KW-0479">Metal-binding</keyword>
<keyword id="KW-0548">Nucleotidyltransferase</keyword>
<keyword id="KW-0804">Transcription</keyword>
<keyword id="KW-0808">Transferase</keyword>
<keyword id="KW-0862">Zinc</keyword>
<proteinExistence type="inferred from homology"/>
<reference key="1">
    <citation type="journal article" date="2008" name="PLoS ONE">
        <title>Comparative analysis of Acinetobacters: three genomes for three lifestyles.</title>
        <authorList>
            <person name="Vallenet D."/>
            <person name="Nordmann P."/>
            <person name="Barbe V."/>
            <person name="Poirel L."/>
            <person name="Mangenot S."/>
            <person name="Bataille E."/>
            <person name="Dossat C."/>
            <person name="Gas S."/>
            <person name="Kreimeyer A."/>
            <person name="Lenoble P."/>
            <person name="Oztas S."/>
            <person name="Poulain J."/>
            <person name="Segurens B."/>
            <person name="Robert C."/>
            <person name="Abergel C."/>
            <person name="Claverie J.-M."/>
            <person name="Raoult D."/>
            <person name="Medigue C."/>
            <person name="Weissenbach J."/>
            <person name="Cruveiller S."/>
        </authorList>
    </citation>
    <scope>NUCLEOTIDE SEQUENCE [LARGE SCALE GENOMIC DNA]</scope>
    <source>
        <strain>SDF</strain>
    </source>
</reference>
<name>RPOC_ACIBS</name>
<gene>
    <name evidence="1" type="primary">rpoC</name>
    <name type="ordered locus">ABSDF3242</name>
</gene>